<name>RUXF_MOUSE</name>
<dbReference type="EMBL" id="AK008240">
    <property type="protein sequence ID" value="BAB25551.1"/>
    <property type="molecule type" value="mRNA"/>
</dbReference>
<dbReference type="CCDS" id="CCDS48672.1"/>
<dbReference type="RefSeq" id="NP_081522.1">
    <property type="nucleotide sequence ID" value="NM_027246.1"/>
</dbReference>
<dbReference type="SMR" id="P62307"/>
<dbReference type="BioGRID" id="213730">
    <property type="interactions" value="40"/>
</dbReference>
<dbReference type="FunCoup" id="P62307">
    <property type="interactions" value="2502"/>
</dbReference>
<dbReference type="IntAct" id="P62307">
    <property type="interactions" value="3"/>
</dbReference>
<dbReference type="MINT" id="P62307"/>
<dbReference type="STRING" id="10090.ENSMUSP00000020203"/>
<dbReference type="iPTMnet" id="P62307"/>
<dbReference type="PhosphoSitePlus" id="P62307"/>
<dbReference type="jPOST" id="P62307"/>
<dbReference type="PaxDb" id="10090-ENSMUSP00000020203"/>
<dbReference type="PeptideAtlas" id="P62307"/>
<dbReference type="ProteomicsDB" id="260874"/>
<dbReference type="Pumba" id="P62307"/>
<dbReference type="TopDownProteomics" id="P62307"/>
<dbReference type="Ensembl" id="ENSMUST00000020203.7">
    <property type="protein sequence ID" value="ENSMUSP00000020203.7"/>
    <property type="gene ID" value="ENSMUSG00000020018.7"/>
</dbReference>
<dbReference type="GeneID" id="69878"/>
<dbReference type="KEGG" id="mmu:69878"/>
<dbReference type="UCSC" id="uc007guw.2">
    <property type="organism name" value="mouse"/>
</dbReference>
<dbReference type="AGR" id="MGI:1917128"/>
<dbReference type="CTD" id="6636"/>
<dbReference type="MGI" id="MGI:1917128">
    <property type="gene designation" value="Snrpf"/>
</dbReference>
<dbReference type="VEuPathDB" id="HostDB:ENSMUSG00000020018"/>
<dbReference type="eggNOG" id="KOG3482">
    <property type="taxonomic scope" value="Eukaryota"/>
</dbReference>
<dbReference type="GeneTree" id="ENSGT00940000154818"/>
<dbReference type="HOGENOM" id="CLU_076902_12_1_1"/>
<dbReference type="InParanoid" id="P62307"/>
<dbReference type="OMA" id="GYMNVQL"/>
<dbReference type="OrthoDB" id="9582814at2759"/>
<dbReference type="PhylomeDB" id="P62307"/>
<dbReference type="TreeFam" id="TF314481"/>
<dbReference type="Reactome" id="R-MMU-111367">
    <property type="pathway name" value="SLBP independent Processing of Histone Pre-mRNAs"/>
</dbReference>
<dbReference type="Reactome" id="R-MMU-191859">
    <property type="pathway name" value="snRNP Assembly"/>
</dbReference>
<dbReference type="Reactome" id="R-MMU-72163">
    <property type="pathway name" value="mRNA Splicing - Major Pathway"/>
</dbReference>
<dbReference type="Reactome" id="R-MMU-72165">
    <property type="pathway name" value="mRNA Splicing - Minor Pathway"/>
</dbReference>
<dbReference type="Reactome" id="R-MMU-73856">
    <property type="pathway name" value="RNA Polymerase II Transcription Termination"/>
</dbReference>
<dbReference type="Reactome" id="R-MMU-77588">
    <property type="pathway name" value="SLBP Dependent Processing of Replication-Dependent Histone Pre-mRNAs"/>
</dbReference>
<dbReference type="BioGRID-ORCS" id="69878">
    <property type="hits" value="26 hits in 80 CRISPR screens"/>
</dbReference>
<dbReference type="ChiTaRS" id="Snrpf">
    <property type="organism name" value="mouse"/>
</dbReference>
<dbReference type="PRO" id="PR:P62307"/>
<dbReference type="Proteomes" id="UP000000589">
    <property type="component" value="Chromosome 10"/>
</dbReference>
<dbReference type="RNAct" id="P62307">
    <property type="molecule type" value="protein"/>
</dbReference>
<dbReference type="Bgee" id="ENSMUSG00000020018">
    <property type="expression patterns" value="Expressed in yolk sac and 75 other cell types or tissues"/>
</dbReference>
<dbReference type="ExpressionAtlas" id="P62307">
    <property type="expression patterns" value="baseline and differential"/>
</dbReference>
<dbReference type="GO" id="GO:0005829">
    <property type="term" value="C:cytosol"/>
    <property type="evidence" value="ECO:0000250"/>
    <property type="project" value="UniProtKB"/>
</dbReference>
<dbReference type="GO" id="GO:0034709">
    <property type="term" value="C:methylosome"/>
    <property type="evidence" value="ECO:0000250"/>
    <property type="project" value="UniProtKB"/>
</dbReference>
<dbReference type="GO" id="GO:0005634">
    <property type="term" value="C:nucleus"/>
    <property type="evidence" value="ECO:0000250"/>
    <property type="project" value="UniProtKB"/>
</dbReference>
<dbReference type="GO" id="GO:0034715">
    <property type="term" value="C:pICln-Sm protein complex"/>
    <property type="evidence" value="ECO:0000250"/>
    <property type="project" value="UniProtKB"/>
</dbReference>
<dbReference type="GO" id="GO:0034719">
    <property type="term" value="C:SMN-Sm protein complex"/>
    <property type="evidence" value="ECO:0000250"/>
    <property type="project" value="UniProtKB"/>
</dbReference>
<dbReference type="GO" id="GO:0005685">
    <property type="term" value="C:U1 snRNP"/>
    <property type="evidence" value="ECO:0000250"/>
    <property type="project" value="UniProtKB"/>
</dbReference>
<dbReference type="GO" id="GO:0005689">
    <property type="term" value="C:U12-type spliceosomal complex"/>
    <property type="evidence" value="ECO:0007669"/>
    <property type="project" value="Ensembl"/>
</dbReference>
<dbReference type="GO" id="GO:0071007">
    <property type="term" value="C:U2-type catalytic step 2 spliceosome"/>
    <property type="evidence" value="ECO:0000250"/>
    <property type="project" value="UniProtKB"/>
</dbReference>
<dbReference type="GO" id="GO:0071005">
    <property type="term" value="C:U2-type precatalytic spliceosome"/>
    <property type="evidence" value="ECO:0000250"/>
    <property type="project" value="UniProtKB"/>
</dbReference>
<dbReference type="GO" id="GO:0005684">
    <property type="term" value="C:U2-type spliceosomal complex"/>
    <property type="evidence" value="ECO:0000250"/>
    <property type="project" value="UniProtKB"/>
</dbReference>
<dbReference type="GO" id="GO:0005687">
    <property type="term" value="C:U4 snRNP"/>
    <property type="evidence" value="ECO:0000250"/>
    <property type="project" value="UniProtKB"/>
</dbReference>
<dbReference type="GO" id="GO:0046540">
    <property type="term" value="C:U4/U6 x U5 tri-snRNP complex"/>
    <property type="evidence" value="ECO:0000250"/>
    <property type="project" value="UniProtKB"/>
</dbReference>
<dbReference type="GO" id="GO:0005683">
    <property type="term" value="C:U7 snRNP"/>
    <property type="evidence" value="ECO:0000250"/>
    <property type="project" value="UniProtKB"/>
</dbReference>
<dbReference type="GO" id="GO:0003723">
    <property type="term" value="F:RNA binding"/>
    <property type="evidence" value="ECO:0007669"/>
    <property type="project" value="UniProtKB-KW"/>
</dbReference>
<dbReference type="GO" id="GO:0000398">
    <property type="term" value="P:mRNA splicing, via spliceosome"/>
    <property type="evidence" value="ECO:0000250"/>
    <property type="project" value="UniProtKB"/>
</dbReference>
<dbReference type="GO" id="GO:0000387">
    <property type="term" value="P:spliceosomal snRNP assembly"/>
    <property type="evidence" value="ECO:0000250"/>
    <property type="project" value="UniProtKB"/>
</dbReference>
<dbReference type="CDD" id="cd01722">
    <property type="entry name" value="Sm_F"/>
    <property type="match status" value="1"/>
</dbReference>
<dbReference type="FunFam" id="2.30.30.100:FF:000133">
    <property type="entry name" value="Small nuclear ribonucleoprotein F"/>
    <property type="match status" value="1"/>
</dbReference>
<dbReference type="Gene3D" id="2.30.30.100">
    <property type="match status" value="1"/>
</dbReference>
<dbReference type="InterPro" id="IPR016487">
    <property type="entry name" value="Lsm6/sSmF"/>
</dbReference>
<dbReference type="InterPro" id="IPR010920">
    <property type="entry name" value="LSM_dom_sf"/>
</dbReference>
<dbReference type="InterPro" id="IPR047575">
    <property type="entry name" value="Sm"/>
</dbReference>
<dbReference type="InterPro" id="IPR001163">
    <property type="entry name" value="Sm_dom_euk/arc"/>
</dbReference>
<dbReference type="InterPro" id="IPR034100">
    <property type="entry name" value="Sm_F"/>
</dbReference>
<dbReference type="PANTHER" id="PTHR11021:SF0">
    <property type="entry name" value="SMALL NUCLEAR RIBONUCLEOPROTEIN F"/>
    <property type="match status" value="1"/>
</dbReference>
<dbReference type="PANTHER" id="PTHR11021">
    <property type="entry name" value="SMALL NUCLEAR RIBONUCLEOPROTEIN F SNRNP-F"/>
    <property type="match status" value="1"/>
</dbReference>
<dbReference type="Pfam" id="PF01423">
    <property type="entry name" value="LSM"/>
    <property type="match status" value="1"/>
</dbReference>
<dbReference type="PIRSF" id="PIRSF006609">
    <property type="entry name" value="snRNP_SmF"/>
    <property type="match status" value="1"/>
</dbReference>
<dbReference type="SMART" id="SM00651">
    <property type="entry name" value="Sm"/>
    <property type="match status" value="1"/>
</dbReference>
<dbReference type="SUPFAM" id="SSF50182">
    <property type="entry name" value="Sm-like ribonucleoproteins"/>
    <property type="match status" value="1"/>
</dbReference>
<dbReference type="PROSITE" id="PS52002">
    <property type="entry name" value="SM"/>
    <property type="match status" value="1"/>
</dbReference>
<gene>
    <name type="primary">Snrpf</name>
</gene>
<sequence length="86" mass="9725">MSLPLNPKPFLNGLTGKPVMVKLKWGMEYKGYLVSVDGYMNMQLANTEEYIDGALSGHLGEVLIRCNNVLYIRGVEEEEEDGEMRE</sequence>
<comment type="function">
    <text evidence="1">Plays a role in pre-mRNA splicing as a core component of the spliceosomal U1, U2, U4 and U5 small nuclear ribonucleoproteins (snRNPs), the building blocks of the spliceosome. Component of both the pre-catalytic spliceosome B complex and activated spliceosome C complexes. As a component of the minor spliceosome, involved in the splicing of U12-type introns in pre-mRNAs. As part of the U7 snRNP it is involved in histone 3'-end processing.</text>
</comment>
<comment type="subunit">
    <text evidence="1">Core component of the spliceosomal U1, U2, U4 and U5 small nuclear ribonucleoproteins (snRNPs), the building blocks of the spliceosome. Most spliceosomal snRNPs contain a common set of Sm proteins, SNRPB, SNRPD1, SNRPD2, SNRPD3, SNRPE, SNRPF and SNRPG that assemble in a heptameric protein ring on the Sm site of the small nuclear RNA to form the core snRNP. Component of the U1 snRNP. The U1 snRNP is composed of the U1 snRNA and the 7 core Sm proteins SNRPB, SNRPD1, SNRPD2, SNRPD3, SNRPE, SNRPF and SNRPG, and at least three U1 snRNP-specific proteins SNRNP70/U1-70K, SNRPA/U1-A and SNRPC/U1-C. Component of the U4/U6-U5 tri-snRNP complex composed of the U4, U6 and U5 snRNAs and at least PRPF3, PRPF4, PRPF6, PRPF8, PRPF31, SNRNP200, TXNL4A, SNRNP40, SNRPB, SNRPD1, SNRPD2, SNRPD3, SNRPE, SNRPF, SNRPG, DDX23, CD2BP2, PPIH, SNU13, EFTUD2, SART1 and USP39, plus LSM2, LSM3, LSM4, LSM5, LSM6, LSM7 and LSM8. Component of the U7 snRNP complex, or U7 Sm protein core complex, that is composed of the U7 snRNA and at least LSM10, LSM11, SNRPB, SNRPD3, SNRPE, SNRPF and SNRPG; the complex does not contain SNRPD1 and SNRPD2. Component of the minor spliceosome, which splices U12-type introns. Part of the SMN-Sm complex that contains SMN1, GEMIN2/SIP1, DDX20/GEMIN3, GEMIN4, GEMIN5, GEMIN6, GEMIN7, GEMIN8, STRAP/UNRIP and the Sm proteins SNRPB, SNRPD1, SNRPD2, SNRPD3, SNRPE, SNRPF and SNRPG; catalyzes core snRNPs assembly. Forms a 6S pICln-Sm complex composed of CLNS1A/pICln, SNRPD1, SNRPD2, SNRPE, SNRPF and SNRPG; ring-like structure where CLNS1A/pICln mimics additional Sm proteins and which is unable to assemble into the core snRNP. Interacts with GEMIN2 (via N-terminus); the interaction is direct. Interacts with SNRPD2; the interaction is direct. Interacts with SNRPE; the interaction is direct.</text>
</comment>
<comment type="subcellular location">
    <subcellularLocation>
        <location evidence="1">Cytoplasm</location>
        <location evidence="1">Cytosol</location>
    </subcellularLocation>
    <subcellularLocation>
        <location evidence="1">Nucleus</location>
    </subcellularLocation>
    <text evidence="1">SMN-mediated assembly into core snRNPs occurs in the cytosol before SMN-mediated transport to the nucleus to be included in spliceosomes.</text>
</comment>
<comment type="similarity">
    <text evidence="3">Belongs to the snRNP Sm proteins family. SmF/LSm6 subfamily.</text>
</comment>
<accession>P62307</accession>
<accession>Q15356</accession>
<proteinExistence type="evidence at protein level"/>
<protein>
    <recommendedName>
        <fullName>Small nuclear ribonucleoprotein F</fullName>
        <shortName>snRNP-F</shortName>
    </recommendedName>
    <alternativeName>
        <fullName>Sm protein F</fullName>
        <shortName>Sm-F</shortName>
        <shortName>SmF</shortName>
    </alternativeName>
</protein>
<evidence type="ECO:0000250" key="1">
    <source>
        <dbReference type="UniProtKB" id="P62306"/>
    </source>
</evidence>
<evidence type="ECO:0000255" key="2">
    <source>
        <dbReference type="PROSITE-ProRule" id="PRU01346"/>
    </source>
</evidence>
<evidence type="ECO:0000305" key="3"/>
<organism>
    <name type="scientific">Mus musculus</name>
    <name type="common">Mouse</name>
    <dbReference type="NCBI Taxonomy" id="10090"/>
    <lineage>
        <taxon>Eukaryota</taxon>
        <taxon>Metazoa</taxon>
        <taxon>Chordata</taxon>
        <taxon>Craniata</taxon>
        <taxon>Vertebrata</taxon>
        <taxon>Euteleostomi</taxon>
        <taxon>Mammalia</taxon>
        <taxon>Eutheria</taxon>
        <taxon>Euarchontoglires</taxon>
        <taxon>Glires</taxon>
        <taxon>Rodentia</taxon>
        <taxon>Myomorpha</taxon>
        <taxon>Muroidea</taxon>
        <taxon>Muridae</taxon>
        <taxon>Murinae</taxon>
        <taxon>Mus</taxon>
        <taxon>Mus</taxon>
    </lineage>
</organism>
<feature type="initiator methionine" description="Removed" evidence="1">
    <location>
        <position position="1"/>
    </location>
</feature>
<feature type="chain" id="PRO_0000125537" description="Small nuclear ribonucleoprotein F">
    <location>
        <begin position="2"/>
        <end position="86"/>
    </location>
</feature>
<feature type="domain" description="Sm" evidence="2">
    <location>
        <begin position="6"/>
        <end position="78"/>
    </location>
</feature>
<feature type="modified residue" description="N-acetylserine" evidence="1">
    <location>
        <position position="2"/>
    </location>
</feature>
<reference key="1">
    <citation type="journal article" date="2005" name="Science">
        <title>The transcriptional landscape of the mammalian genome.</title>
        <authorList>
            <person name="Carninci P."/>
            <person name="Kasukawa T."/>
            <person name="Katayama S."/>
            <person name="Gough J."/>
            <person name="Frith M.C."/>
            <person name="Maeda N."/>
            <person name="Oyama R."/>
            <person name="Ravasi T."/>
            <person name="Lenhard B."/>
            <person name="Wells C."/>
            <person name="Kodzius R."/>
            <person name="Shimokawa K."/>
            <person name="Bajic V.B."/>
            <person name="Brenner S.E."/>
            <person name="Batalov S."/>
            <person name="Forrest A.R."/>
            <person name="Zavolan M."/>
            <person name="Davis M.J."/>
            <person name="Wilming L.G."/>
            <person name="Aidinis V."/>
            <person name="Allen J.E."/>
            <person name="Ambesi-Impiombato A."/>
            <person name="Apweiler R."/>
            <person name="Aturaliya R.N."/>
            <person name="Bailey T.L."/>
            <person name="Bansal M."/>
            <person name="Baxter L."/>
            <person name="Beisel K.W."/>
            <person name="Bersano T."/>
            <person name="Bono H."/>
            <person name="Chalk A.M."/>
            <person name="Chiu K.P."/>
            <person name="Choudhary V."/>
            <person name="Christoffels A."/>
            <person name="Clutterbuck D.R."/>
            <person name="Crowe M.L."/>
            <person name="Dalla E."/>
            <person name="Dalrymple B.P."/>
            <person name="de Bono B."/>
            <person name="Della Gatta G."/>
            <person name="di Bernardo D."/>
            <person name="Down T."/>
            <person name="Engstrom P."/>
            <person name="Fagiolini M."/>
            <person name="Faulkner G."/>
            <person name="Fletcher C.F."/>
            <person name="Fukushima T."/>
            <person name="Furuno M."/>
            <person name="Futaki S."/>
            <person name="Gariboldi M."/>
            <person name="Georgii-Hemming P."/>
            <person name="Gingeras T.R."/>
            <person name="Gojobori T."/>
            <person name="Green R.E."/>
            <person name="Gustincich S."/>
            <person name="Harbers M."/>
            <person name="Hayashi Y."/>
            <person name="Hensch T.K."/>
            <person name="Hirokawa N."/>
            <person name="Hill D."/>
            <person name="Huminiecki L."/>
            <person name="Iacono M."/>
            <person name="Ikeo K."/>
            <person name="Iwama A."/>
            <person name="Ishikawa T."/>
            <person name="Jakt M."/>
            <person name="Kanapin A."/>
            <person name="Katoh M."/>
            <person name="Kawasawa Y."/>
            <person name="Kelso J."/>
            <person name="Kitamura H."/>
            <person name="Kitano H."/>
            <person name="Kollias G."/>
            <person name="Krishnan S.P."/>
            <person name="Kruger A."/>
            <person name="Kummerfeld S.K."/>
            <person name="Kurochkin I.V."/>
            <person name="Lareau L.F."/>
            <person name="Lazarevic D."/>
            <person name="Lipovich L."/>
            <person name="Liu J."/>
            <person name="Liuni S."/>
            <person name="McWilliam S."/>
            <person name="Madan Babu M."/>
            <person name="Madera M."/>
            <person name="Marchionni L."/>
            <person name="Matsuda H."/>
            <person name="Matsuzawa S."/>
            <person name="Miki H."/>
            <person name="Mignone F."/>
            <person name="Miyake S."/>
            <person name="Morris K."/>
            <person name="Mottagui-Tabar S."/>
            <person name="Mulder N."/>
            <person name="Nakano N."/>
            <person name="Nakauchi H."/>
            <person name="Ng P."/>
            <person name="Nilsson R."/>
            <person name="Nishiguchi S."/>
            <person name="Nishikawa S."/>
            <person name="Nori F."/>
            <person name="Ohara O."/>
            <person name="Okazaki Y."/>
            <person name="Orlando V."/>
            <person name="Pang K.C."/>
            <person name="Pavan W.J."/>
            <person name="Pavesi G."/>
            <person name="Pesole G."/>
            <person name="Petrovsky N."/>
            <person name="Piazza S."/>
            <person name="Reed J."/>
            <person name="Reid J.F."/>
            <person name="Ring B.Z."/>
            <person name="Ringwald M."/>
            <person name="Rost B."/>
            <person name="Ruan Y."/>
            <person name="Salzberg S.L."/>
            <person name="Sandelin A."/>
            <person name="Schneider C."/>
            <person name="Schoenbach C."/>
            <person name="Sekiguchi K."/>
            <person name="Semple C.A."/>
            <person name="Seno S."/>
            <person name="Sessa L."/>
            <person name="Sheng Y."/>
            <person name="Shibata Y."/>
            <person name="Shimada H."/>
            <person name="Shimada K."/>
            <person name="Silva D."/>
            <person name="Sinclair B."/>
            <person name="Sperling S."/>
            <person name="Stupka E."/>
            <person name="Sugiura K."/>
            <person name="Sultana R."/>
            <person name="Takenaka Y."/>
            <person name="Taki K."/>
            <person name="Tammoja K."/>
            <person name="Tan S.L."/>
            <person name="Tang S."/>
            <person name="Taylor M.S."/>
            <person name="Tegner J."/>
            <person name="Teichmann S.A."/>
            <person name="Ueda H.R."/>
            <person name="van Nimwegen E."/>
            <person name="Verardo R."/>
            <person name="Wei C.L."/>
            <person name="Yagi K."/>
            <person name="Yamanishi H."/>
            <person name="Zabarovsky E."/>
            <person name="Zhu S."/>
            <person name="Zimmer A."/>
            <person name="Hide W."/>
            <person name="Bult C."/>
            <person name="Grimmond S.M."/>
            <person name="Teasdale R.D."/>
            <person name="Liu E.T."/>
            <person name="Brusic V."/>
            <person name="Quackenbush J."/>
            <person name="Wahlestedt C."/>
            <person name="Mattick J.S."/>
            <person name="Hume D.A."/>
            <person name="Kai C."/>
            <person name="Sasaki D."/>
            <person name="Tomaru Y."/>
            <person name="Fukuda S."/>
            <person name="Kanamori-Katayama M."/>
            <person name="Suzuki M."/>
            <person name="Aoki J."/>
            <person name="Arakawa T."/>
            <person name="Iida J."/>
            <person name="Imamura K."/>
            <person name="Itoh M."/>
            <person name="Kato T."/>
            <person name="Kawaji H."/>
            <person name="Kawagashira N."/>
            <person name="Kawashima T."/>
            <person name="Kojima M."/>
            <person name="Kondo S."/>
            <person name="Konno H."/>
            <person name="Nakano K."/>
            <person name="Ninomiya N."/>
            <person name="Nishio T."/>
            <person name="Okada M."/>
            <person name="Plessy C."/>
            <person name="Shibata K."/>
            <person name="Shiraki T."/>
            <person name="Suzuki S."/>
            <person name="Tagami M."/>
            <person name="Waki K."/>
            <person name="Watahiki A."/>
            <person name="Okamura-Oho Y."/>
            <person name="Suzuki H."/>
            <person name="Kawai J."/>
            <person name="Hayashizaki Y."/>
        </authorList>
    </citation>
    <scope>NUCLEOTIDE SEQUENCE [LARGE SCALE MRNA]</scope>
    <source>
        <strain>C57BL/6J</strain>
        <tissue>Small intestine</tissue>
    </source>
</reference>
<reference key="2">
    <citation type="journal article" date="2010" name="Cell">
        <title>A tissue-specific atlas of mouse protein phosphorylation and expression.</title>
        <authorList>
            <person name="Huttlin E.L."/>
            <person name="Jedrychowski M.P."/>
            <person name="Elias J.E."/>
            <person name="Goswami T."/>
            <person name="Rad R."/>
            <person name="Beausoleil S.A."/>
            <person name="Villen J."/>
            <person name="Haas W."/>
            <person name="Sowa M.E."/>
            <person name="Gygi S.P."/>
        </authorList>
    </citation>
    <scope>IDENTIFICATION BY MASS SPECTROMETRY [LARGE SCALE ANALYSIS]</scope>
    <source>
        <tissue>Brain</tissue>
        <tissue>Brown adipose tissue</tissue>
        <tissue>Heart</tissue>
        <tissue>Kidney</tissue>
        <tissue>Liver</tissue>
        <tissue>Lung</tissue>
        <tissue>Pancreas</tissue>
        <tissue>Spleen</tissue>
        <tissue>Testis</tissue>
    </source>
</reference>
<keyword id="KW-0007">Acetylation</keyword>
<keyword id="KW-0963">Cytoplasm</keyword>
<keyword id="KW-0507">mRNA processing</keyword>
<keyword id="KW-0508">mRNA splicing</keyword>
<keyword id="KW-0539">Nucleus</keyword>
<keyword id="KW-1185">Reference proteome</keyword>
<keyword id="KW-0687">Ribonucleoprotein</keyword>
<keyword id="KW-0694">RNA-binding</keyword>
<keyword id="KW-0747">Spliceosome</keyword>